<comment type="function">
    <text evidence="1">Catalyzes the condensation of the acetyl group of acetyl-CoA with 3-methyl-2-oxobutanoate (2-ketoisovalerate) to form 3-carboxy-3-hydroxy-4-methylpentanoate (2-isopropylmalate).</text>
</comment>
<comment type="catalytic activity">
    <reaction evidence="1">
        <text>3-methyl-2-oxobutanoate + acetyl-CoA + H2O = (2S)-2-isopropylmalate + CoA + H(+)</text>
        <dbReference type="Rhea" id="RHEA:21524"/>
        <dbReference type="ChEBI" id="CHEBI:1178"/>
        <dbReference type="ChEBI" id="CHEBI:11851"/>
        <dbReference type="ChEBI" id="CHEBI:15377"/>
        <dbReference type="ChEBI" id="CHEBI:15378"/>
        <dbReference type="ChEBI" id="CHEBI:57287"/>
        <dbReference type="ChEBI" id="CHEBI:57288"/>
        <dbReference type="EC" id="2.3.3.13"/>
    </reaction>
</comment>
<comment type="cofactor">
    <cofactor evidence="1">
        <name>Mn(2+)</name>
        <dbReference type="ChEBI" id="CHEBI:29035"/>
    </cofactor>
</comment>
<comment type="pathway">
    <text evidence="1">Amino-acid biosynthesis; L-leucine biosynthesis; L-leucine from 3-methyl-2-oxobutanoate: step 1/4.</text>
</comment>
<comment type="subunit">
    <text evidence="1">Homodimer.</text>
</comment>
<comment type="subcellular location">
    <subcellularLocation>
        <location evidence="1">Cytoplasm</location>
    </subcellularLocation>
</comment>
<comment type="similarity">
    <text evidence="1">Belongs to the alpha-IPM synthase/homocitrate synthase family. LeuA type 1 subfamily.</text>
</comment>
<sequence length="522" mass="56953">MSNRVIIFDTTLRDGEQALAASLSVKEKLQIAMALERLGVDVMEVGFPVSSPGDFESVQTIARTIKNSRVCALSRALEKDIDAAAQALSVADQFRIHTFISTSTIHVESKLKRSFDQVLEMAVSAVKYARRFTDDVEFSCEDAGRTPIENLCRMVEAAILAGARTINIPDTVGYTVPSEFGNIIQTLFNRVPNIDQAVISVHCHDDLGLSVANSITAVQHGARQIECTINGIGERAGNCSLEEIAMILATRKGMLGLETGINAKEIHRTSNLVSQLCNMPVQANKAIVGANAFTHSSGIHQDGMLKAQNTYEIMTPESIGLNRNNLNMTSRSGRHVIKHRMEEMGYSEHDYNMDALYEEFLKLADKKGQVFDYDLEALAFMEAQAEEDNHYQLQQLVVQSDSTEGVATATVRIEVGGEIKTEAATGNGPVDAAYNAIARATDRRIDIISYKLGAKGVGQNALGQVDITAVYHEQNFHGVGLATDVVEASARALVHVMNLTCRADKVADYKQSMQKNRELGGV</sequence>
<feature type="chain" id="PRO_1000149281" description="2-isopropylmalate synthase">
    <location>
        <begin position="1"/>
        <end position="522"/>
    </location>
</feature>
<feature type="domain" description="Pyruvate carboxyltransferase" evidence="1">
    <location>
        <begin position="5"/>
        <end position="267"/>
    </location>
</feature>
<feature type="region of interest" description="Regulatory domain" evidence="1">
    <location>
        <begin position="392"/>
        <end position="522"/>
    </location>
</feature>
<feature type="binding site" evidence="1">
    <location>
        <position position="14"/>
    </location>
    <ligand>
        <name>Mn(2+)</name>
        <dbReference type="ChEBI" id="CHEBI:29035"/>
    </ligand>
</feature>
<feature type="binding site" evidence="1">
    <location>
        <position position="202"/>
    </location>
    <ligand>
        <name>Mn(2+)</name>
        <dbReference type="ChEBI" id="CHEBI:29035"/>
    </ligand>
</feature>
<feature type="binding site" evidence="1">
    <location>
        <position position="204"/>
    </location>
    <ligand>
        <name>Mn(2+)</name>
        <dbReference type="ChEBI" id="CHEBI:29035"/>
    </ligand>
</feature>
<feature type="binding site" evidence="1">
    <location>
        <position position="238"/>
    </location>
    <ligand>
        <name>Mn(2+)</name>
        <dbReference type="ChEBI" id="CHEBI:29035"/>
    </ligand>
</feature>
<keyword id="KW-0028">Amino-acid biosynthesis</keyword>
<keyword id="KW-0100">Branched-chain amino acid biosynthesis</keyword>
<keyword id="KW-0963">Cytoplasm</keyword>
<keyword id="KW-0432">Leucine biosynthesis</keyword>
<keyword id="KW-0464">Manganese</keyword>
<keyword id="KW-0479">Metal-binding</keyword>
<keyword id="KW-0808">Transferase</keyword>
<reference key="1">
    <citation type="submission" date="2007-11" db="EMBL/GenBank/DDBJ databases">
        <title>Complete sequence of chromosome of Shewanella baltica OS195.</title>
        <authorList>
            <consortium name="US DOE Joint Genome Institute"/>
            <person name="Copeland A."/>
            <person name="Lucas S."/>
            <person name="Lapidus A."/>
            <person name="Barry K."/>
            <person name="Glavina del Rio T."/>
            <person name="Dalin E."/>
            <person name="Tice H."/>
            <person name="Pitluck S."/>
            <person name="Chain P."/>
            <person name="Malfatti S."/>
            <person name="Shin M."/>
            <person name="Vergez L."/>
            <person name="Schmutz J."/>
            <person name="Larimer F."/>
            <person name="Land M."/>
            <person name="Hauser L."/>
            <person name="Kyrpides N."/>
            <person name="Kim E."/>
            <person name="Brettar I."/>
            <person name="Rodrigues J."/>
            <person name="Konstantinidis K."/>
            <person name="Klappenbach J."/>
            <person name="Hofle M."/>
            <person name="Tiedje J."/>
            <person name="Richardson P."/>
        </authorList>
    </citation>
    <scope>NUCLEOTIDE SEQUENCE [LARGE SCALE GENOMIC DNA]</scope>
    <source>
        <strain>OS195</strain>
    </source>
</reference>
<gene>
    <name evidence="1" type="primary">leuA</name>
    <name type="ordered locus">Sbal195_0397</name>
</gene>
<organism>
    <name type="scientific">Shewanella baltica (strain OS195)</name>
    <dbReference type="NCBI Taxonomy" id="399599"/>
    <lineage>
        <taxon>Bacteria</taxon>
        <taxon>Pseudomonadati</taxon>
        <taxon>Pseudomonadota</taxon>
        <taxon>Gammaproteobacteria</taxon>
        <taxon>Alteromonadales</taxon>
        <taxon>Shewanellaceae</taxon>
        <taxon>Shewanella</taxon>
    </lineage>
</organism>
<evidence type="ECO:0000255" key="1">
    <source>
        <dbReference type="HAMAP-Rule" id="MF_01025"/>
    </source>
</evidence>
<proteinExistence type="inferred from homology"/>
<protein>
    <recommendedName>
        <fullName evidence="1">2-isopropylmalate synthase</fullName>
        <ecNumber evidence="1">2.3.3.13</ecNumber>
    </recommendedName>
    <alternativeName>
        <fullName evidence="1">Alpha-IPM synthase</fullName>
    </alternativeName>
    <alternativeName>
        <fullName evidence="1">Alpha-isopropylmalate synthase</fullName>
    </alternativeName>
</protein>
<name>LEU1_SHEB9</name>
<dbReference type="EC" id="2.3.3.13" evidence="1"/>
<dbReference type="EMBL" id="CP000891">
    <property type="protein sequence ID" value="ABX47578.1"/>
    <property type="molecule type" value="Genomic_DNA"/>
</dbReference>
<dbReference type="RefSeq" id="WP_006086686.1">
    <property type="nucleotide sequence ID" value="NC_009997.1"/>
</dbReference>
<dbReference type="SMR" id="A9KY13"/>
<dbReference type="GeneID" id="11770736"/>
<dbReference type="KEGG" id="sbn:Sbal195_0397"/>
<dbReference type="HOGENOM" id="CLU_022158_0_1_6"/>
<dbReference type="UniPathway" id="UPA00048">
    <property type="reaction ID" value="UER00070"/>
</dbReference>
<dbReference type="Proteomes" id="UP000000770">
    <property type="component" value="Chromosome"/>
</dbReference>
<dbReference type="GO" id="GO:0005829">
    <property type="term" value="C:cytosol"/>
    <property type="evidence" value="ECO:0007669"/>
    <property type="project" value="TreeGrafter"/>
</dbReference>
<dbReference type="GO" id="GO:0003852">
    <property type="term" value="F:2-isopropylmalate synthase activity"/>
    <property type="evidence" value="ECO:0007669"/>
    <property type="project" value="UniProtKB-UniRule"/>
</dbReference>
<dbReference type="GO" id="GO:0003985">
    <property type="term" value="F:acetyl-CoA C-acetyltransferase activity"/>
    <property type="evidence" value="ECO:0007669"/>
    <property type="project" value="UniProtKB-UniRule"/>
</dbReference>
<dbReference type="GO" id="GO:0030145">
    <property type="term" value="F:manganese ion binding"/>
    <property type="evidence" value="ECO:0007669"/>
    <property type="project" value="UniProtKB-UniRule"/>
</dbReference>
<dbReference type="GO" id="GO:0009098">
    <property type="term" value="P:L-leucine biosynthetic process"/>
    <property type="evidence" value="ECO:0007669"/>
    <property type="project" value="UniProtKB-UniRule"/>
</dbReference>
<dbReference type="CDD" id="cd07940">
    <property type="entry name" value="DRE_TIM_IPMS"/>
    <property type="match status" value="1"/>
</dbReference>
<dbReference type="FunFam" id="1.10.238.260:FF:000001">
    <property type="entry name" value="2-isopropylmalate synthase"/>
    <property type="match status" value="1"/>
</dbReference>
<dbReference type="FunFam" id="3.20.20.70:FF:000010">
    <property type="entry name" value="2-isopropylmalate synthase"/>
    <property type="match status" value="1"/>
</dbReference>
<dbReference type="Gene3D" id="1.10.238.260">
    <property type="match status" value="1"/>
</dbReference>
<dbReference type="Gene3D" id="3.30.160.270">
    <property type="match status" value="1"/>
</dbReference>
<dbReference type="Gene3D" id="3.20.20.70">
    <property type="entry name" value="Aldolase class I"/>
    <property type="match status" value="1"/>
</dbReference>
<dbReference type="HAMAP" id="MF_01025">
    <property type="entry name" value="LeuA_type1"/>
    <property type="match status" value="1"/>
</dbReference>
<dbReference type="InterPro" id="IPR050073">
    <property type="entry name" value="2-IPM_HCS-like"/>
</dbReference>
<dbReference type="InterPro" id="IPR013709">
    <property type="entry name" value="2-isopropylmalate_synth_dimer"/>
</dbReference>
<dbReference type="InterPro" id="IPR002034">
    <property type="entry name" value="AIPM/Hcit_synth_CS"/>
</dbReference>
<dbReference type="InterPro" id="IPR013785">
    <property type="entry name" value="Aldolase_TIM"/>
</dbReference>
<dbReference type="InterPro" id="IPR054691">
    <property type="entry name" value="LeuA/HCS_post-cat"/>
</dbReference>
<dbReference type="InterPro" id="IPR036230">
    <property type="entry name" value="LeuA_allosteric_dom_sf"/>
</dbReference>
<dbReference type="InterPro" id="IPR005671">
    <property type="entry name" value="LeuA_bact_synth"/>
</dbReference>
<dbReference type="InterPro" id="IPR000891">
    <property type="entry name" value="PYR_CT"/>
</dbReference>
<dbReference type="NCBIfam" id="TIGR00973">
    <property type="entry name" value="leuA_bact"/>
    <property type="match status" value="1"/>
</dbReference>
<dbReference type="NCBIfam" id="NF002084">
    <property type="entry name" value="PRK00915.1-1"/>
    <property type="match status" value="1"/>
</dbReference>
<dbReference type="NCBIfam" id="NF002086">
    <property type="entry name" value="PRK00915.1-3"/>
    <property type="match status" value="1"/>
</dbReference>
<dbReference type="PANTHER" id="PTHR10277:SF9">
    <property type="entry name" value="2-ISOPROPYLMALATE SYNTHASE 1, CHLOROPLASTIC-RELATED"/>
    <property type="match status" value="1"/>
</dbReference>
<dbReference type="PANTHER" id="PTHR10277">
    <property type="entry name" value="HOMOCITRATE SYNTHASE-RELATED"/>
    <property type="match status" value="1"/>
</dbReference>
<dbReference type="Pfam" id="PF22617">
    <property type="entry name" value="HCS_D2"/>
    <property type="match status" value="1"/>
</dbReference>
<dbReference type="Pfam" id="PF00682">
    <property type="entry name" value="HMGL-like"/>
    <property type="match status" value="1"/>
</dbReference>
<dbReference type="Pfam" id="PF08502">
    <property type="entry name" value="LeuA_dimer"/>
    <property type="match status" value="1"/>
</dbReference>
<dbReference type="SMART" id="SM00917">
    <property type="entry name" value="LeuA_dimer"/>
    <property type="match status" value="1"/>
</dbReference>
<dbReference type="SUPFAM" id="SSF110921">
    <property type="entry name" value="2-isopropylmalate synthase LeuA, allosteric (dimerisation) domain"/>
    <property type="match status" value="1"/>
</dbReference>
<dbReference type="SUPFAM" id="SSF51569">
    <property type="entry name" value="Aldolase"/>
    <property type="match status" value="1"/>
</dbReference>
<dbReference type="PROSITE" id="PS00815">
    <property type="entry name" value="AIPM_HOMOCIT_SYNTH_1"/>
    <property type="match status" value="1"/>
</dbReference>
<dbReference type="PROSITE" id="PS00816">
    <property type="entry name" value="AIPM_HOMOCIT_SYNTH_2"/>
    <property type="match status" value="1"/>
</dbReference>
<dbReference type="PROSITE" id="PS50991">
    <property type="entry name" value="PYR_CT"/>
    <property type="match status" value="1"/>
</dbReference>
<accession>A9KY13</accession>